<accession>Q69DJ1</accession>
<keyword id="KW-1003">Cell membrane</keyword>
<keyword id="KW-0325">Glycoprotein</keyword>
<keyword id="KW-0472">Membrane</keyword>
<keyword id="KW-0597">Phosphoprotein</keyword>
<keyword id="KW-0812">Transmembrane</keyword>
<keyword id="KW-1133">Transmembrane helix</keyword>
<keyword id="KW-0813">Transport</keyword>
<organism>
    <name type="scientific">Bubalus bubalis</name>
    <name type="common">Domestic water buffalo</name>
    <dbReference type="NCBI Taxonomy" id="89462"/>
    <lineage>
        <taxon>Eukaryota</taxon>
        <taxon>Metazoa</taxon>
        <taxon>Chordata</taxon>
        <taxon>Craniata</taxon>
        <taxon>Vertebrata</taxon>
        <taxon>Euteleostomi</taxon>
        <taxon>Mammalia</taxon>
        <taxon>Eutheria</taxon>
        <taxon>Laurasiatheria</taxon>
        <taxon>Artiodactyla</taxon>
        <taxon>Ruminantia</taxon>
        <taxon>Pecora</taxon>
        <taxon>Bovidae</taxon>
        <taxon>Bovinae</taxon>
        <taxon>Bubalus</taxon>
    </lineage>
</organism>
<comment type="function">
    <text evidence="3">Sulfate transporter which mediates sulfate uptake into chondrocytes in order to maintain adequate sulfation of proteoglycans which is needed for cartilage development (By similarity). Mediates electroneutral anion exchange of sulfate ions for oxalate ions, sulfate and oxalate ions for chloride and/or hydroxyl ions and chloride ions for bromide, iodide and nitrate ions (By similarity). The coupling of sulfate transport to both hydroxyl and chloride ions likely serves to ensure transport at both acidic pH when most sulfate uptake is mediated by sulfate-hydroxide exchange and alkaline pH when most sulfate uptake is mediated by sulfate-chloride exchange (By similarity). Essential for chondrocyte proliferation, differentiation and cell size expansion (By similarity).</text>
</comment>
<comment type="catalytic activity">
    <reaction evidence="3">
        <text>oxalate(in) + sulfate(out) = oxalate(out) + sulfate(in)</text>
        <dbReference type="Rhea" id="RHEA:72275"/>
        <dbReference type="ChEBI" id="CHEBI:16189"/>
        <dbReference type="ChEBI" id="CHEBI:30623"/>
    </reaction>
</comment>
<comment type="catalytic activity">
    <reaction evidence="3">
        <text>sulfate(out) + 2 chloride(in) = sulfate(in) + 2 chloride(out)</text>
        <dbReference type="Rhea" id="RHEA:75091"/>
        <dbReference type="ChEBI" id="CHEBI:16189"/>
        <dbReference type="ChEBI" id="CHEBI:17996"/>
    </reaction>
</comment>
<comment type="catalytic activity">
    <reaction evidence="3">
        <text>oxalate(out) + 2 chloride(in) = oxalate(in) + 2 chloride(out)</text>
        <dbReference type="Rhea" id="RHEA:75095"/>
        <dbReference type="ChEBI" id="CHEBI:17996"/>
        <dbReference type="ChEBI" id="CHEBI:30623"/>
    </reaction>
</comment>
<comment type="catalytic activity">
    <reaction evidence="3">
        <text>bromide(in) + chloride(out) = bromide(out) + chloride(in)</text>
        <dbReference type="Rhea" id="RHEA:75335"/>
        <dbReference type="ChEBI" id="CHEBI:15858"/>
        <dbReference type="ChEBI" id="CHEBI:17996"/>
    </reaction>
</comment>
<comment type="catalytic activity">
    <reaction evidence="3">
        <text>nitrate(in) + chloride(out) = nitrate(out) + chloride(in)</text>
        <dbReference type="Rhea" id="RHEA:75339"/>
        <dbReference type="ChEBI" id="CHEBI:17632"/>
        <dbReference type="ChEBI" id="CHEBI:17996"/>
    </reaction>
</comment>
<comment type="catalytic activity">
    <reaction evidence="3">
        <text>iodide(in) + chloride(out) = iodide(out) + chloride(in)</text>
        <dbReference type="Rhea" id="RHEA:72379"/>
        <dbReference type="ChEBI" id="CHEBI:16382"/>
        <dbReference type="ChEBI" id="CHEBI:17996"/>
    </reaction>
</comment>
<comment type="subcellular location">
    <subcellularLocation>
        <location evidence="2">Cell membrane</location>
        <topology evidence="4">Multi-pass membrane protein</topology>
    </subcellularLocation>
    <subcellularLocation>
        <location evidence="1">Apical cell membrane</location>
        <topology evidence="4">Multi-pass membrane protein</topology>
    </subcellularLocation>
</comment>
<comment type="PTM">
    <text evidence="2">N-glycosylated.</text>
</comment>
<comment type="similarity">
    <text evidence="7">Belongs to the SLC26A/SulP transporter (TC 2.A.53) family.</text>
</comment>
<proteinExistence type="inferred from homology"/>
<sequence length="733" mass="81419">MSLKNEEQNDLSPKDSVKGNDQYRAPSGIHLEREEESRNDFWQFEPSNLFRHPRIHLEPQEKSDNNFKKFVIKKLEKSCQCSSTKAKNTIFGFLPVLQWLPKYDLKKNILGDVMSGLIVGILLVPQSIAYSLLAGQEPIYGLYTSFFASLIYFILGTSRHISVGIFGILCLMIGEVVDRELYIAGYDAVHAASNESSLVNQMPDKTCDRSCYAIIVGSTVTFVAGVYQVAMGFFQVGFVSVYLSDALLGGFVTGASFTILTSQVKYLLGLSLPRSAGVGSLITTWIHVFRNIHKTNICDLITSLLCLLVLLPTKELNERFKSKLKAPIPVELFVVVAATLASHFGKLNEKYGTSIAGHIPTGFMPPEAPDWNLIPRVAIDAIAIAIIGFAITVSLSEMFAKKHGYTVKANQEMYAIGFCNIIPSFFHCFTTSAALAKTLVKESTGCQTQVSGVMTALVLLLVLLVIAPLFFSLQKSVLGVITIVNLRGALCKFKDLPQMWRISRMDTVIWFVTMLSSALISTEIGLLTGVCFSMFCVILRTQKPKASLLGLVEDSEVFESMSAYKNLQAKSGIKIFRFVAPLYYVNKEYFKSVLYKKTLNPVLVKAAQRKAAKRKIKRETVTPSGIQDEVSVQLSHDPLEFHTIVIDCSAIQFLDTAGIHTLKEVRRDYEAIGIQVLLAQCNPSVRTPGRGEYCKKDEENLLFYSVYEAMTFAEDSQNQKETYVPNGPNFSSD</sequence>
<evidence type="ECO:0000250" key="1">
    <source>
        <dbReference type="UniProtKB" id="O70531"/>
    </source>
</evidence>
<evidence type="ECO:0000250" key="2">
    <source>
        <dbReference type="UniProtKB" id="P50443"/>
    </source>
</evidence>
<evidence type="ECO:0000250" key="3">
    <source>
        <dbReference type="UniProtKB" id="Q62273"/>
    </source>
</evidence>
<evidence type="ECO:0000255" key="4"/>
<evidence type="ECO:0000255" key="5">
    <source>
        <dbReference type="PROSITE-ProRule" id="PRU00198"/>
    </source>
</evidence>
<evidence type="ECO:0000256" key="6">
    <source>
        <dbReference type="SAM" id="MobiDB-lite"/>
    </source>
</evidence>
<evidence type="ECO:0000305" key="7"/>
<feature type="chain" id="PRO_0000380691" description="Sulfate transporter">
    <location>
        <begin position="1"/>
        <end position="733"/>
    </location>
</feature>
<feature type="transmembrane region" description="Helical" evidence="4">
    <location>
        <begin position="113"/>
        <end position="133"/>
    </location>
</feature>
<feature type="transmembrane region" description="Helical" evidence="4">
    <location>
        <begin position="138"/>
        <end position="158"/>
    </location>
</feature>
<feature type="transmembrane region" description="Helical" evidence="4">
    <location>
        <begin position="214"/>
        <end position="234"/>
    </location>
</feature>
<feature type="transmembrane region" description="Helical" evidence="4">
    <location>
        <begin position="237"/>
        <end position="257"/>
    </location>
</feature>
<feature type="transmembrane region" description="Helical" evidence="4">
    <location>
        <begin position="379"/>
        <end position="399"/>
    </location>
</feature>
<feature type="transmembrane region" description="Helical" evidence="4">
    <location>
        <begin position="415"/>
        <end position="435"/>
    </location>
</feature>
<feature type="transmembrane region" description="Helical" evidence="4">
    <location>
        <begin position="453"/>
        <end position="473"/>
    </location>
</feature>
<feature type="transmembrane region" description="Helical" evidence="4">
    <location>
        <begin position="519"/>
        <end position="539"/>
    </location>
</feature>
<feature type="domain" description="STAS" evidence="5">
    <location>
        <begin position="563"/>
        <end position="714"/>
    </location>
</feature>
<feature type="region of interest" description="Disordered" evidence="6">
    <location>
        <begin position="1"/>
        <end position="37"/>
    </location>
</feature>
<feature type="compositionally biased region" description="Basic and acidic residues" evidence="6">
    <location>
        <begin position="1"/>
        <end position="18"/>
    </location>
</feature>
<feature type="modified residue" description="Phosphoserine" evidence="2">
    <location>
        <position position="12"/>
    </location>
</feature>
<feature type="modified residue" description="Phosphoserine" evidence="2">
    <location>
        <position position="16"/>
    </location>
</feature>
<feature type="glycosylation site" description="N-linked (GlcNAc...) asparagine" evidence="4">
    <location>
        <position position="194"/>
    </location>
</feature>
<protein>
    <recommendedName>
        <fullName>Sulfate transporter</fullName>
    </recommendedName>
    <alternativeName>
        <fullName>Solute carrier family 26 member 2</fullName>
    </alternativeName>
</protein>
<gene>
    <name type="primary">SLC26A2</name>
</gene>
<dbReference type="EMBL" id="AY350740">
    <property type="protein sequence ID" value="AAR06603.1"/>
    <property type="molecule type" value="Genomic_DNA"/>
</dbReference>
<dbReference type="SMR" id="Q69DJ1"/>
<dbReference type="GlyCosmos" id="Q69DJ1">
    <property type="glycosylation" value="1 site, No reported glycans"/>
</dbReference>
<dbReference type="GO" id="GO:0016324">
    <property type="term" value="C:apical plasma membrane"/>
    <property type="evidence" value="ECO:0007669"/>
    <property type="project" value="UniProtKB-SubCell"/>
</dbReference>
<dbReference type="GO" id="GO:0005886">
    <property type="term" value="C:plasma membrane"/>
    <property type="evidence" value="ECO:0000250"/>
    <property type="project" value="UniProtKB"/>
</dbReference>
<dbReference type="GO" id="GO:0008271">
    <property type="term" value="F:secondary active sulfate transmembrane transporter activity"/>
    <property type="evidence" value="ECO:0007669"/>
    <property type="project" value="InterPro"/>
</dbReference>
<dbReference type="GO" id="GO:0015116">
    <property type="term" value="F:sulfate transmembrane transporter activity"/>
    <property type="evidence" value="ECO:0000250"/>
    <property type="project" value="UniProtKB"/>
</dbReference>
<dbReference type="GO" id="GO:0002062">
    <property type="term" value="P:chondrocyte differentiation"/>
    <property type="evidence" value="ECO:0000250"/>
    <property type="project" value="UniProtKB"/>
</dbReference>
<dbReference type="GO" id="GO:0035988">
    <property type="term" value="P:chondrocyte proliferation"/>
    <property type="evidence" value="ECO:0000250"/>
    <property type="project" value="UniProtKB"/>
</dbReference>
<dbReference type="GO" id="GO:1902358">
    <property type="term" value="P:sulfate transmembrane transport"/>
    <property type="evidence" value="ECO:0000250"/>
    <property type="project" value="UniProtKB"/>
</dbReference>
<dbReference type="FunFam" id="3.30.750.24:FF:000015">
    <property type="entry name" value="Sulfate transporter"/>
    <property type="match status" value="1"/>
</dbReference>
<dbReference type="Gene3D" id="3.30.750.24">
    <property type="entry name" value="STAS domain"/>
    <property type="match status" value="1"/>
</dbReference>
<dbReference type="InterPro" id="IPR018045">
    <property type="entry name" value="S04_transporter_CS"/>
</dbReference>
<dbReference type="InterPro" id="IPR011547">
    <property type="entry name" value="SLC26A/SulP_dom"/>
</dbReference>
<dbReference type="InterPro" id="IPR001902">
    <property type="entry name" value="SLC26A/SulP_fam"/>
</dbReference>
<dbReference type="InterPro" id="IPR002645">
    <property type="entry name" value="STAS_dom"/>
</dbReference>
<dbReference type="InterPro" id="IPR036513">
    <property type="entry name" value="STAS_dom_sf"/>
</dbReference>
<dbReference type="NCBIfam" id="TIGR00815">
    <property type="entry name" value="sulP"/>
    <property type="match status" value="1"/>
</dbReference>
<dbReference type="PANTHER" id="PTHR11814">
    <property type="entry name" value="SULFATE TRANSPORTER"/>
    <property type="match status" value="1"/>
</dbReference>
<dbReference type="Pfam" id="PF01740">
    <property type="entry name" value="STAS"/>
    <property type="match status" value="1"/>
</dbReference>
<dbReference type="Pfam" id="PF00916">
    <property type="entry name" value="Sulfate_transp"/>
    <property type="match status" value="1"/>
</dbReference>
<dbReference type="SUPFAM" id="SSF52091">
    <property type="entry name" value="SpoIIaa-like"/>
    <property type="match status" value="1"/>
</dbReference>
<dbReference type="PROSITE" id="PS01130">
    <property type="entry name" value="SLC26A"/>
    <property type="match status" value="1"/>
</dbReference>
<dbReference type="PROSITE" id="PS50801">
    <property type="entry name" value="STAS"/>
    <property type="match status" value="1"/>
</dbReference>
<name>S26A2_BUBBU</name>
<reference key="1">
    <citation type="submission" date="2003-07" db="EMBL/GenBank/DDBJ databases">
        <title>Assignment of solute carrier family 26 (sulfate transporter), member 2 (SLC26a2) to river buffalo (Bubalus bubalis) chromosome 9q26 by fluorescence in situ hybridization and R-banding.</title>
        <authorList>
            <person name="Kierstein G."/>
            <person name="Iannuzzi L."/>
            <person name="Silva A."/>
            <person name="Schneider M.P."/>
            <person name="Brenig B."/>
        </authorList>
    </citation>
    <scope>NUCLEOTIDE SEQUENCE [GENOMIC DNA]</scope>
</reference>